<sequence length="260" mass="27607">MTSLKLLKEKAPLVICITNDVVKNFTANGLVALGASPAMSEFPADLEDLLKYAGGLLINIGTLTDENWKLYQAALKIAEKYNVPAVLDPVACGAGEYRKKVADDLINNYKLAAIRGNAGEIASLVGIDVASKGVDSAGVDNIDEIALAANEKFNIPIVVTGEVDAIAVNGEVVTIHNGSAMMPKVIGTGCLLGAVVASFIGLEKGQELKSLETAMLVYNIAGEMAEKRPNGHLPGTFKVEFINALYEITDEDVKEFKRVK</sequence>
<protein>
    <recommendedName>
        <fullName evidence="1">Hydroxyethylthiazole kinase 1</fullName>
        <ecNumber evidence="1">2.7.1.50</ecNumber>
    </recommendedName>
    <alternativeName>
        <fullName evidence="1">4-methyl-5-beta-hydroxyethylthiazole kinase 1</fullName>
        <shortName evidence="1">TH kinase 1</shortName>
        <shortName evidence="1">Thz kinase 1</shortName>
    </alternativeName>
</protein>
<accession>Q8DQK5</accession>
<comment type="function">
    <text evidence="1">Catalyzes the phosphorylation of the hydroxyl group of 4-methyl-5-beta-hydroxyethylthiazole (THZ).</text>
</comment>
<comment type="catalytic activity">
    <reaction evidence="1">
        <text>5-(2-hydroxyethyl)-4-methylthiazole + ATP = 4-methyl-5-(2-phosphooxyethyl)-thiazole + ADP + H(+)</text>
        <dbReference type="Rhea" id="RHEA:24212"/>
        <dbReference type="ChEBI" id="CHEBI:15378"/>
        <dbReference type="ChEBI" id="CHEBI:17957"/>
        <dbReference type="ChEBI" id="CHEBI:30616"/>
        <dbReference type="ChEBI" id="CHEBI:58296"/>
        <dbReference type="ChEBI" id="CHEBI:456216"/>
        <dbReference type="EC" id="2.7.1.50"/>
    </reaction>
</comment>
<comment type="cofactor">
    <cofactor evidence="1">
        <name>Mg(2+)</name>
        <dbReference type="ChEBI" id="CHEBI:18420"/>
    </cofactor>
</comment>
<comment type="pathway">
    <text evidence="1">Cofactor biosynthesis; thiamine diphosphate biosynthesis; 4-methyl-5-(2-phosphoethyl)-thiazole from 5-(2-hydroxyethyl)-4-methylthiazole: step 1/1.</text>
</comment>
<comment type="similarity">
    <text evidence="1">Belongs to the Thz kinase family.</text>
</comment>
<comment type="sequence caution" evidence="2">
    <conflict type="erroneous initiation">
        <sequence resource="EMBL-CDS" id="AAK99433"/>
    </conflict>
</comment>
<feature type="chain" id="PRO_0000156964" description="Hydroxyethylthiazole kinase 1">
    <location>
        <begin position="1"/>
        <end position="260"/>
    </location>
</feature>
<feature type="binding site" evidence="1">
    <location>
        <position position="39"/>
    </location>
    <ligand>
        <name>substrate</name>
    </ligand>
</feature>
<feature type="binding site" evidence="1">
    <location>
        <position position="115"/>
    </location>
    <ligand>
        <name>ATP</name>
        <dbReference type="ChEBI" id="CHEBI:30616"/>
    </ligand>
</feature>
<feature type="binding site" evidence="1">
    <location>
        <position position="160"/>
    </location>
    <ligand>
        <name>ATP</name>
        <dbReference type="ChEBI" id="CHEBI:30616"/>
    </ligand>
</feature>
<feature type="binding site" evidence="1">
    <location>
        <position position="187"/>
    </location>
    <ligand>
        <name>substrate</name>
    </ligand>
</feature>
<proteinExistence type="inferred from homology"/>
<reference key="1">
    <citation type="journal article" date="2001" name="J. Bacteriol.">
        <title>Genome of the bacterium Streptococcus pneumoniae strain R6.</title>
        <authorList>
            <person name="Hoskins J."/>
            <person name="Alborn W.E. Jr."/>
            <person name="Arnold J."/>
            <person name="Blaszczak L.C."/>
            <person name="Burgett S."/>
            <person name="DeHoff B.S."/>
            <person name="Estrem S.T."/>
            <person name="Fritz L."/>
            <person name="Fu D.-J."/>
            <person name="Fuller W."/>
            <person name="Geringer C."/>
            <person name="Gilmour R."/>
            <person name="Glass J.S."/>
            <person name="Khoja H."/>
            <person name="Kraft A.R."/>
            <person name="Lagace R.E."/>
            <person name="LeBlanc D.J."/>
            <person name="Lee L.N."/>
            <person name="Lefkowitz E.J."/>
            <person name="Lu J."/>
            <person name="Matsushima P."/>
            <person name="McAhren S.M."/>
            <person name="McHenney M."/>
            <person name="McLeaster K."/>
            <person name="Mundy C.W."/>
            <person name="Nicas T.I."/>
            <person name="Norris F.H."/>
            <person name="O'Gara M."/>
            <person name="Peery R.B."/>
            <person name="Robertson G.T."/>
            <person name="Rockey P."/>
            <person name="Sun P.-M."/>
            <person name="Winkler M.E."/>
            <person name="Yang Y."/>
            <person name="Young-Bellido M."/>
            <person name="Zhao G."/>
            <person name="Zook C.A."/>
            <person name="Baltz R.H."/>
            <person name="Jaskunas S.R."/>
            <person name="Rosteck P.R. Jr."/>
            <person name="Skatrud P.L."/>
            <person name="Glass J.I."/>
        </authorList>
    </citation>
    <scope>NUCLEOTIDE SEQUENCE [LARGE SCALE GENOMIC DNA]</scope>
    <source>
        <strain>ATCC BAA-255 / R6</strain>
    </source>
</reference>
<gene>
    <name evidence="1" type="primary">thiM1</name>
    <name type="ordered locus">spr0629</name>
</gene>
<name>THIM1_STRR6</name>
<evidence type="ECO:0000255" key="1">
    <source>
        <dbReference type="HAMAP-Rule" id="MF_00228"/>
    </source>
</evidence>
<evidence type="ECO:0000305" key="2"/>
<keyword id="KW-0067">ATP-binding</keyword>
<keyword id="KW-0418">Kinase</keyword>
<keyword id="KW-0460">Magnesium</keyword>
<keyword id="KW-0479">Metal-binding</keyword>
<keyword id="KW-0547">Nucleotide-binding</keyword>
<keyword id="KW-1185">Reference proteome</keyword>
<keyword id="KW-0784">Thiamine biosynthesis</keyword>
<keyword id="KW-0808">Transferase</keyword>
<organism>
    <name type="scientific">Streptococcus pneumoniae (strain ATCC BAA-255 / R6)</name>
    <dbReference type="NCBI Taxonomy" id="171101"/>
    <lineage>
        <taxon>Bacteria</taxon>
        <taxon>Bacillati</taxon>
        <taxon>Bacillota</taxon>
        <taxon>Bacilli</taxon>
        <taxon>Lactobacillales</taxon>
        <taxon>Streptococcaceae</taxon>
        <taxon>Streptococcus</taxon>
    </lineage>
</organism>
<dbReference type="EC" id="2.7.1.50" evidence="1"/>
<dbReference type="EMBL" id="AE007317">
    <property type="protein sequence ID" value="AAK99433.1"/>
    <property type="status" value="ALT_INIT"/>
    <property type="molecule type" value="Genomic_DNA"/>
</dbReference>
<dbReference type="PIR" id="E97950">
    <property type="entry name" value="E97950"/>
</dbReference>
<dbReference type="RefSeq" id="NP_358223.1">
    <property type="nucleotide sequence ID" value="NC_003098.1"/>
</dbReference>
<dbReference type="SMR" id="Q8DQK5"/>
<dbReference type="STRING" id="171101.spr0629"/>
<dbReference type="KEGG" id="spr:spr0629"/>
<dbReference type="PATRIC" id="fig|171101.6.peg.700"/>
<dbReference type="eggNOG" id="COG2145">
    <property type="taxonomic scope" value="Bacteria"/>
</dbReference>
<dbReference type="HOGENOM" id="CLU_019943_0_2_9"/>
<dbReference type="UniPathway" id="UPA00060">
    <property type="reaction ID" value="UER00139"/>
</dbReference>
<dbReference type="Proteomes" id="UP000000586">
    <property type="component" value="Chromosome"/>
</dbReference>
<dbReference type="GO" id="GO:0005524">
    <property type="term" value="F:ATP binding"/>
    <property type="evidence" value="ECO:0007669"/>
    <property type="project" value="UniProtKB-UniRule"/>
</dbReference>
<dbReference type="GO" id="GO:0004417">
    <property type="term" value="F:hydroxyethylthiazole kinase activity"/>
    <property type="evidence" value="ECO:0007669"/>
    <property type="project" value="UniProtKB-UniRule"/>
</dbReference>
<dbReference type="GO" id="GO:0000287">
    <property type="term" value="F:magnesium ion binding"/>
    <property type="evidence" value="ECO:0007669"/>
    <property type="project" value="UniProtKB-UniRule"/>
</dbReference>
<dbReference type="GO" id="GO:0009228">
    <property type="term" value="P:thiamine biosynthetic process"/>
    <property type="evidence" value="ECO:0007669"/>
    <property type="project" value="UniProtKB-KW"/>
</dbReference>
<dbReference type="GO" id="GO:0009229">
    <property type="term" value="P:thiamine diphosphate biosynthetic process"/>
    <property type="evidence" value="ECO:0007669"/>
    <property type="project" value="UniProtKB-UniRule"/>
</dbReference>
<dbReference type="CDD" id="cd01170">
    <property type="entry name" value="THZ_kinase"/>
    <property type="match status" value="1"/>
</dbReference>
<dbReference type="Gene3D" id="3.40.1190.20">
    <property type="match status" value="1"/>
</dbReference>
<dbReference type="HAMAP" id="MF_00228">
    <property type="entry name" value="Thz_kinase"/>
    <property type="match status" value="1"/>
</dbReference>
<dbReference type="InterPro" id="IPR000417">
    <property type="entry name" value="Hyethyz_kinase"/>
</dbReference>
<dbReference type="InterPro" id="IPR029056">
    <property type="entry name" value="Ribokinase-like"/>
</dbReference>
<dbReference type="NCBIfam" id="NF006830">
    <property type="entry name" value="PRK09355.1"/>
    <property type="match status" value="1"/>
</dbReference>
<dbReference type="NCBIfam" id="TIGR00694">
    <property type="entry name" value="thiM"/>
    <property type="match status" value="1"/>
</dbReference>
<dbReference type="Pfam" id="PF02110">
    <property type="entry name" value="HK"/>
    <property type="match status" value="1"/>
</dbReference>
<dbReference type="PIRSF" id="PIRSF000513">
    <property type="entry name" value="Thz_kinase"/>
    <property type="match status" value="1"/>
</dbReference>
<dbReference type="PRINTS" id="PR01099">
    <property type="entry name" value="HYETHTZKNASE"/>
</dbReference>
<dbReference type="SUPFAM" id="SSF53613">
    <property type="entry name" value="Ribokinase-like"/>
    <property type="match status" value="1"/>
</dbReference>